<gene>
    <name evidence="1" type="primary">der</name>
    <name type="synonym">engA</name>
    <name type="ordered locus">BPP2851</name>
</gene>
<protein>
    <recommendedName>
        <fullName evidence="1">GTPase Der</fullName>
    </recommendedName>
    <alternativeName>
        <fullName evidence="1">GTP-binding protein EngA</fullName>
    </alternativeName>
</protein>
<name>DER_BORPA</name>
<feature type="chain" id="PRO_0000178969" description="GTPase Der">
    <location>
        <begin position="1"/>
        <end position="451"/>
    </location>
</feature>
<feature type="domain" description="EngA-type G 1">
    <location>
        <begin position="5"/>
        <end position="170"/>
    </location>
</feature>
<feature type="domain" description="EngA-type G 2">
    <location>
        <begin position="186"/>
        <end position="359"/>
    </location>
</feature>
<feature type="domain" description="KH-like" evidence="1">
    <location>
        <begin position="360"/>
        <end position="444"/>
    </location>
</feature>
<feature type="binding site" evidence="1">
    <location>
        <begin position="11"/>
        <end position="18"/>
    </location>
    <ligand>
        <name>GTP</name>
        <dbReference type="ChEBI" id="CHEBI:37565"/>
        <label>1</label>
    </ligand>
</feature>
<feature type="binding site" evidence="1">
    <location>
        <begin position="58"/>
        <end position="62"/>
    </location>
    <ligand>
        <name>GTP</name>
        <dbReference type="ChEBI" id="CHEBI:37565"/>
        <label>1</label>
    </ligand>
</feature>
<feature type="binding site" evidence="1">
    <location>
        <begin position="122"/>
        <end position="125"/>
    </location>
    <ligand>
        <name>GTP</name>
        <dbReference type="ChEBI" id="CHEBI:37565"/>
        <label>1</label>
    </ligand>
</feature>
<feature type="binding site" evidence="1">
    <location>
        <begin position="192"/>
        <end position="199"/>
    </location>
    <ligand>
        <name>GTP</name>
        <dbReference type="ChEBI" id="CHEBI:37565"/>
        <label>2</label>
    </ligand>
</feature>
<feature type="binding site" evidence="1">
    <location>
        <begin position="239"/>
        <end position="243"/>
    </location>
    <ligand>
        <name>GTP</name>
        <dbReference type="ChEBI" id="CHEBI:37565"/>
        <label>2</label>
    </ligand>
</feature>
<feature type="binding site" evidence="1">
    <location>
        <begin position="304"/>
        <end position="307"/>
    </location>
    <ligand>
        <name>GTP</name>
        <dbReference type="ChEBI" id="CHEBI:37565"/>
        <label>2</label>
    </ligand>
</feature>
<sequence length="451" mass="49428">MSFKPVVALVGRPNVGKSTLFNRLTRSRAALVADFSGLTRDRHYGEGRVGDTPFLVIDTGGFEPVAKDGILAEMARQTRQAIAEADVVVFLVDARAGVNAHDHEIARLLRKSGQQRVLLAVNKAEGMGVGNATGDFHELGLGEPHPISAAHGDGIVDLIEIALSGLVAPPADTGEQLEQDVVDHRIKLAIVGRPNVGKSTLINTLLGEERVIAFDMPGTTRDAIEIDFERDGRKYTLIDTAGLRKRGKVFEAIEKFSVIKTLQAIEASNVVLLMIDAQAEVSEQDAHIAGFVLETGRAVVVAINKWDGLDSDQRERIEREFQRKLRFLGFARMHTISALKGQGVKPLLKSVNAAHAAAFAKLSTPRLTRELQAAVEQQPPPRKGIFRPKMRYAHQGGQNPPLIVIHGNALDAVPDSYRRYLETRFRNAFDLAGTPLRIEFKSSRNPYVQEN</sequence>
<comment type="function">
    <text evidence="1">GTPase that plays an essential role in the late steps of ribosome biogenesis.</text>
</comment>
<comment type="subunit">
    <text evidence="1">Associates with the 50S ribosomal subunit.</text>
</comment>
<comment type="similarity">
    <text evidence="1">Belongs to the TRAFAC class TrmE-Era-EngA-EngB-Septin-like GTPase superfamily. EngA (Der) GTPase family.</text>
</comment>
<evidence type="ECO:0000255" key="1">
    <source>
        <dbReference type="HAMAP-Rule" id="MF_00195"/>
    </source>
</evidence>
<reference key="1">
    <citation type="journal article" date="2003" name="Nat. Genet.">
        <title>Comparative analysis of the genome sequences of Bordetella pertussis, Bordetella parapertussis and Bordetella bronchiseptica.</title>
        <authorList>
            <person name="Parkhill J."/>
            <person name="Sebaihia M."/>
            <person name="Preston A."/>
            <person name="Murphy L.D."/>
            <person name="Thomson N.R."/>
            <person name="Harris D.E."/>
            <person name="Holden M.T.G."/>
            <person name="Churcher C.M."/>
            <person name="Bentley S.D."/>
            <person name="Mungall K.L."/>
            <person name="Cerdeno-Tarraga A.-M."/>
            <person name="Temple L."/>
            <person name="James K.D."/>
            <person name="Harris B."/>
            <person name="Quail M.A."/>
            <person name="Achtman M."/>
            <person name="Atkin R."/>
            <person name="Baker S."/>
            <person name="Basham D."/>
            <person name="Bason N."/>
            <person name="Cherevach I."/>
            <person name="Chillingworth T."/>
            <person name="Collins M."/>
            <person name="Cronin A."/>
            <person name="Davis P."/>
            <person name="Doggett J."/>
            <person name="Feltwell T."/>
            <person name="Goble A."/>
            <person name="Hamlin N."/>
            <person name="Hauser H."/>
            <person name="Holroyd S."/>
            <person name="Jagels K."/>
            <person name="Leather S."/>
            <person name="Moule S."/>
            <person name="Norberczak H."/>
            <person name="O'Neil S."/>
            <person name="Ormond D."/>
            <person name="Price C."/>
            <person name="Rabbinowitsch E."/>
            <person name="Rutter S."/>
            <person name="Sanders M."/>
            <person name="Saunders D."/>
            <person name="Seeger K."/>
            <person name="Sharp S."/>
            <person name="Simmonds M."/>
            <person name="Skelton J."/>
            <person name="Squares R."/>
            <person name="Squares S."/>
            <person name="Stevens K."/>
            <person name="Unwin L."/>
            <person name="Whitehead S."/>
            <person name="Barrell B.G."/>
            <person name="Maskell D.J."/>
        </authorList>
    </citation>
    <scope>NUCLEOTIDE SEQUENCE [LARGE SCALE GENOMIC DNA]</scope>
    <source>
        <strain>12822 / ATCC BAA-587 / NCTC 13253</strain>
    </source>
</reference>
<organism>
    <name type="scientific">Bordetella parapertussis (strain 12822 / ATCC BAA-587 / NCTC 13253)</name>
    <dbReference type="NCBI Taxonomy" id="257311"/>
    <lineage>
        <taxon>Bacteria</taxon>
        <taxon>Pseudomonadati</taxon>
        <taxon>Pseudomonadota</taxon>
        <taxon>Betaproteobacteria</taxon>
        <taxon>Burkholderiales</taxon>
        <taxon>Alcaligenaceae</taxon>
        <taxon>Bordetella</taxon>
    </lineage>
</organism>
<keyword id="KW-0342">GTP-binding</keyword>
<keyword id="KW-0547">Nucleotide-binding</keyword>
<keyword id="KW-0677">Repeat</keyword>
<keyword id="KW-0690">Ribosome biogenesis</keyword>
<accession>Q7W6Q0</accession>
<proteinExistence type="inferred from homology"/>
<dbReference type="EMBL" id="BX640431">
    <property type="protein sequence ID" value="CAE38143.1"/>
    <property type="molecule type" value="Genomic_DNA"/>
</dbReference>
<dbReference type="RefSeq" id="WP_003810703.1">
    <property type="nucleotide sequence ID" value="NC_002928.3"/>
</dbReference>
<dbReference type="SMR" id="Q7W6Q0"/>
<dbReference type="GeneID" id="69601971"/>
<dbReference type="GeneID" id="93204638"/>
<dbReference type="KEGG" id="bpa:BPP2851"/>
<dbReference type="HOGENOM" id="CLU_016077_5_0_4"/>
<dbReference type="Proteomes" id="UP000001421">
    <property type="component" value="Chromosome"/>
</dbReference>
<dbReference type="GO" id="GO:0016887">
    <property type="term" value="F:ATP hydrolysis activity"/>
    <property type="evidence" value="ECO:0007669"/>
    <property type="project" value="InterPro"/>
</dbReference>
<dbReference type="GO" id="GO:0005525">
    <property type="term" value="F:GTP binding"/>
    <property type="evidence" value="ECO:0007669"/>
    <property type="project" value="UniProtKB-UniRule"/>
</dbReference>
<dbReference type="GO" id="GO:0043022">
    <property type="term" value="F:ribosome binding"/>
    <property type="evidence" value="ECO:0007669"/>
    <property type="project" value="TreeGrafter"/>
</dbReference>
<dbReference type="GO" id="GO:0042254">
    <property type="term" value="P:ribosome biogenesis"/>
    <property type="evidence" value="ECO:0007669"/>
    <property type="project" value="UniProtKB-KW"/>
</dbReference>
<dbReference type="CDD" id="cd01894">
    <property type="entry name" value="EngA1"/>
    <property type="match status" value="1"/>
</dbReference>
<dbReference type="CDD" id="cd01895">
    <property type="entry name" value="EngA2"/>
    <property type="match status" value="1"/>
</dbReference>
<dbReference type="FunFam" id="3.30.300.20:FF:000004">
    <property type="entry name" value="GTPase Der"/>
    <property type="match status" value="1"/>
</dbReference>
<dbReference type="FunFam" id="3.40.50.300:FF:000040">
    <property type="entry name" value="GTPase Der"/>
    <property type="match status" value="1"/>
</dbReference>
<dbReference type="FunFam" id="3.40.50.300:FF:000057">
    <property type="entry name" value="GTPase Der"/>
    <property type="match status" value="1"/>
</dbReference>
<dbReference type="Gene3D" id="3.30.300.20">
    <property type="match status" value="1"/>
</dbReference>
<dbReference type="Gene3D" id="3.40.50.300">
    <property type="entry name" value="P-loop containing nucleotide triphosphate hydrolases"/>
    <property type="match status" value="2"/>
</dbReference>
<dbReference type="HAMAP" id="MF_00195">
    <property type="entry name" value="GTPase_Der"/>
    <property type="match status" value="1"/>
</dbReference>
<dbReference type="InterPro" id="IPR003593">
    <property type="entry name" value="AAA+_ATPase"/>
</dbReference>
<dbReference type="InterPro" id="IPR031166">
    <property type="entry name" value="G_ENGA"/>
</dbReference>
<dbReference type="InterPro" id="IPR006073">
    <property type="entry name" value="GTP-bd"/>
</dbReference>
<dbReference type="InterPro" id="IPR016484">
    <property type="entry name" value="GTPase_Der"/>
</dbReference>
<dbReference type="InterPro" id="IPR032859">
    <property type="entry name" value="KH_dom-like"/>
</dbReference>
<dbReference type="InterPro" id="IPR015946">
    <property type="entry name" value="KH_dom-like_a/b"/>
</dbReference>
<dbReference type="InterPro" id="IPR027417">
    <property type="entry name" value="P-loop_NTPase"/>
</dbReference>
<dbReference type="InterPro" id="IPR005225">
    <property type="entry name" value="Small_GTP-bd"/>
</dbReference>
<dbReference type="NCBIfam" id="TIGR03594">
    <property type="entry name" value="GTPase_EngA"/>
    <property type="match status" value="1"/>
</dbReference>
<dbReference type="NCBIfam" id="TIGR00231">
    <property type="entry name" value="small_GTP"/>
    <property type="match status" value="2"/>
</dbReference>
<dbReference type="PANTHER" id="PTHR43834">
    <property type="entry name" value="GTPASE DER"/>
    <property type="match status" value="1"/>
</dbReference>
<dbReference type="PANTHER" id="PTHR43834:SF6">
    <property type="entry name" value="GTPASE DER"/>
    <property type="match status" value="1"/>
</dbReference>
<dbReference type="Pfam" id="PF14714">
    <property type="entry name" value="KH_dom-like"/>
    <property type="match status" value="1"/>
</dbReference>
<dbReference type="Pfam" id="PF01926">
    <property type="entry name" value="MMR_HSR1"/>
    <property type="match status" value="2"/>
</dbReference>
<dbReference type="PIRSF" id="PIRSF006485">
    <property type="entry name" value="GTP-binding_EngA"/>
    <property type="match status" value="1"/>
</dbReference>
<dbReference type="PRINTS" id="PR00326">
    <property type="entry name" value="GTP1OBG"/>
</dbReference>
<dbReference type="SMART" id="SM00382">
    <property type="entry name" value="AAA"/>
    <property type="match status" value="2"/>
</dbReference>
<dbReference type="SUPFAM" id="SSF52540">
    <property type="entry name" value="P-loop containing nucleoside triphosphate hydrolases"/>
    <property type="match status" value="2"/>
</dbReference>
<dbReference type="PROSITE" id="PS51712">
    <property type="entry name" value="G_ENGA"/>
    <property type="match status" value="2"/>
</dbReference>